<name>ADCY4_MOUSE</name>
<comment type="function">
    <text evidence="2">Catalyzes the formation of the signaling molecule cAMP in response to G-protein signaling.</text>
</comment>
<comment type="catalytic activity">
    <reaction evidence="2">
        <text>ATP = 3',5'-cyclic AMP + diphosphate</text>
        <dbReference type="Rhea" id="RHEA:15389"/>
        <dbReference type="ChEBI" id="CHEBI:30616"/>
        <dbReference type="ChEBI" id="CHEBI:33019"/>
        <dbReference type="ChEBI" id="CHEBI:58165"/>
        <dbReference type="EC" id="4.6.1.1"/>
    </reaction>
</comment>
<comment type="cofactor">
    <cofactor evidence="2">
        <name>Mg(2+)</name>
        <dbReference type="ChEBI" id="CHEBI:18420"/>
    </cofactor>
    <cofactor evidence="2">
        <name>Mn(2+)</name>
        <dbReference type="ChEBI" id="CHEBI:29035"/>
    </cofactor>
    <text evidence="3">Binds 2 magnesium ions per subunit. Is also active with manganese (in vitro).</text>
</comment>
<comment type="activity regulation">
    <text evidence="2">Activated by forskolin. Insensitive to calcium/calmodulin. Stimulated by GNAS and by the G-protein beta and gamma subunit complex.</text>
</comment>
<comment type="subcellular location">
    <subcellularLocation>
        <location evidence="2">Cell membrane</location>
        <topology evidence="2">Multi-pass membrane protein</topology>
    </subcellularLocation>
    <subcellularLocation>
        <location evidence="4">Cytoplasm</location>
    </subcellularLocation>
</comment>
<comment type="domain">
    <text evidence="3">The protein contains two modules with six transmembrane helices each; both are required for catalytic activity. Isolated N-terminal or C-terminal modules have no catalytic activity, but when they are brought together, enzyme activity is restored. The active site is at the interface of the two modules.</text>
</comment>
<comment type="similarity">
    <text evidence="6">Belongs to the adenylyl cyclase class-4/guanylyl cyclase family.</text>
</comment>
<dbReference type="EC" id="4.6.1.1" evidence="2"/>
<dbReference type="EMBL" id="AF442771">
    <property type="protein sequence ID" value="AAL38004.1"/>
    <property type="molecule type" value="mRNA"/>
</dbReference>
<dbReference type="EMBL" id="BC015299">
    <property type="protein sequence ID" value="AAH15299.1"/>
    <property type="molecule type" value="mRNA"/>
</dbReference>
<dbReference type="CCDS" id="CCDS27130.1"/>
<dbReference type="RefSeq" id="NP_001348533.1">
    <property type="nucleotide sequence ID" value="NM_001361604.1"/>
</dbReference>
<dbReference type="RefSeq" id="NP_536683.1">
    <property type="nucleotide sequence ID" value="NM_080435.2"/>
</dbReference>
<dbReference type="RefSeq" id="XP_006518386.1">
    <property type="nucleotide sequence ID" value="XM_006518323.1"/>
</dbReference>
<dbReference type="RefSeq" id="XP_006518387.1">
    <property type="nucleotide sequence ID" value="XM_006518324.1"/>
</dbReference>
<dbReference type="SMR" id="Q91WF3"/>
<dbReference type="BioGRID" id="222367">
    <property type="interactions" value="4"/>
</dbReference>
<dbReference type="FunCoup" id="Q91WF3">
    <property type="interactions" value="1043"/>
</dbReference>
<dbReference type="STRING" id="10090.ENSMUSP00000130530"/>
<dbReference type="GlyCosmos" id="Q91WF3">
    <property type="glycosylation" value="2 sites, No reported glycans"/>
</dbReference>
<dbReference type="GlyGen" id="Q91WF3">
    <property type="glycosylation" value="2 sites"/>
</dbReference>
<dbReference type="iPTMnet" id="Q91WF3"/>
<dbReference type="PhosphoSitePlus" id="Q91WF3"/>
<dbReference type="PaxDb" id="10090-ENSMUSP00000130530"/>
<dbReference type="ProteomicsDB" id="285761"/>
<dbReference type="Antibodypedia" id="3908">
    <property type="antibodies" value="234 antibodies from 26 providers"/>
</dbReference>
<dbReference type="DNASU" id="104110"/>
<dbReference type="Ensembl" id="ENSMUST00000002398.9">
    <property type="protein sequence ID" value="ENSMUSP00000002398.8"/>
    <property type="gene ID" value="ENSMUSG00000022220.15"/>
</dbReference>
<dbReference type="Ensembl" id="ENSMUST00000170223.9">
    <property type="protein sequence ID" value="ENSMUSP00000130530.2"/>
    <property type="gene ID" value="ENSMUSG00000022220.15"/>
</dbReference>
<dbReference type="GeneID" id="104110"/>
<dbReference type="KEGG" id="mmu:104110"/>
<dbReference type="UCSC" id="uc007uat.1">
    <property type="organism name" value="mouse"/>
</dbReference>
<dbReference type="AGR" id="MGI:99674"/>
<dbReference type="CTD" id="196883"/>
<dbReference type="MGI" id="MGI:99674">
    <property type="gene designation" value="Adcy4"/>
</dbReference>
<dbReference type="VEuPathDB" id="HostDB:ENSMUSG00000022220"/>
<dbReference type="eggNOG" id="KOG3619">
    <property type="taxonomic scope" value="Eukaryota"/>
</dbReference>
<dbReference type="GeneTree" id="ENSGT00940000159445"/>
<dbReference type="HOGENOM" id="CLU_001072_2_5_1"/>
<dbReference type="InParanoid" id="Q91WF3"/>
<dbReference type="OMA" id="SKMVEFW"/>
<dbReference type="OrthoDB" id="10035433at2759"/>
<dbReference type="PhylomeDB" id="Q91WF3"/>
<dbReference type="TreeFam" id="TF313845"/>
<dbReference type="BRENDA" id="4.6.1.1">
    <property type="organism ID" value="3474"/>
</dbReference>
<dbReference type="Reactome" id="R-MMU-163615">
    <property type="pathway name" value="PKA activation"/>
</dbReference>
<dbReference type="Reactome" id="R-MMU-170660">
    <property type="pathway name" value="Adenylate cyclase activating pathway"/>
</dbReference>
<dbReference type="Reactome" id="R-MMU-170670">
    <property type="pathway name" value="Adenylate cyclase inhibitory pathway"/>
</dbReference>
<dbReference type="Reactome" id="R-MMU-418597">
    <property type="pathway name" value="G alpha (z) signalling events"/>
</dbReference>
<dbReference type="Reactome" id="R-MMU-5610787">
    <property type="pathway name" value="Hedgehog 'off' state"/>
</dbReference>
<dbReference type="BioGRID-ORCS" id="104110">
    <property type="hits" value="3 hits in 78 CRISPR screens"/>
</dbReference>
<dbReference type="PRO" id="PR:Q91WF3"/>
<dbReference type="Proteomes" id="UP000000589">
    <property type="component" value="Chromosome 14"/>
</dbReference>
<dbReference type="RNAct" id="Q91WF3">
    <property type="molecule type" value="protein"/>
</dbReference>
<dbReference type="Bgee" id="ENSMUSG00000022220">
    <property type="expression patterns" value="Expressed in external carotid artery and 158 other cell types or tissues"/>
</dbReference>
<dbReference type="ExpressionAtlas" id="Q91WF3">
    <property type="expression patterns" value="baseline and differential"/>
</dbReference>
<dbReference type="GO" id="GO:0005737">
    <property type="term" value="C:cytoplasm"/>
    <property type="evidence" value="ECO:0007669"/>
    <property type="project" value="UniProtKB-SubCell"/>
</dbReference>
<dbReference type="GO" id="GO:0030425">
    <property type="term" value="C:dendrite"/>
    <property type="evidence" value="ECO:0000314"/>
    <property type="project" value="MGI"/>
</dbReference>
<dbReference type="GO" id="GO:0005886">
    <property type="term" value="C:plasma membrane"/>
    <property type="evidence" value="ECO:0000304"/>
    <property type="project" value="MGI"/>
</dbReference>
<dbReference type="GO" id="GO:0004016">
    <property type="term" value="F:adenylate cyclase activity"/>
    <property type="evidence" value="ECO:0000304"/>
    <property type="project" value="MGI"/>
</dbReference>
<dbReference type="GO" id="GO:0005524">
    <property type="term" value="F:ATP binding"/>
    <property type="evidence" value="ECO:0007669"/>
    <property type="project" value="UniProtKB-KW"/>
</dbReference>
<dbReference type="GO" id="GO:0046872">
    <property type="term" value="F:metal ion binding"/>
    <property type="evidence" value="ECO:0007669"/>
    <property type="project" value="UniProtKB-KW"/>
</dbReference>
<dbReference type="GO" id="GO:0005080">
    <property type="term" value="F:protein kinase C binding"/>
    <property type="evidence" value="ECO:0007669"/>
    <property type="project" value="Ensembl"/>
</dbReference>
<dbReference type="GO" id="GO:0007188">
    <property type="term" value="P:adenylate cyclase-modulating G protein-coupled receptor signaling pathway"/>
    <property type="evidence" value="ECO:0000314"/>
    <property type="project" value="MGI"/>
</dbReference>
<dbReference type="GO" id="GO:0006171">
    <property type="term" value="P:cAMP biosynthetic process"/>
    <property type="evidence" value="ECO:0000304"/>
    <property type="project" value="MGI"/>
</dbReference>
<dbReference type="GO" id="GO:0035556">
    <property type="term" value="P:intracellular signal transduction"/>
    <property type="evidence" value="ECO:0007669"/>
    <property type="project" value="InterPro"/>
</dbReference>
<dbReference type="CDD" id="cd07302">
    <property type="entry name" value="CHD"/>
    <property type="match status" value="2"/>
</dbReference>
<dbReference type="FunFam" id="3.30.70.1230:FF:000003">
    <property type="entry name" value="Adenylate cyclase"/>
    <property type="match status" value="1"/>
</dbReference>
<dbReference type="FunFam" id="3.30.70.1230:FF:000020">
    <property type="entry name" value="Adenylate cyclase"/>
    <property type="match status" value="1"/>
</dbReference>
<dbReference type="Gene3D" id="3.30.70.1230">
    <property type="entry name" value="Nucleotide cyclase"/>
    <property type="match status" value="2"/>
</dbReference>
<dbReference type="InterPro" id="IPR001054">
    <property type="entry name" value="A/G_cyclase"/>
</dbReference>
<dbReference type="InterPro" id="IPR018297">
    <property type="entry name" value="A/G_cyclase_CS"/>
</dbReference>
<dbReference type="InterPro" id="IPR032628">
    <property type="entry name" value="AC_N"/>
</dbReference>
<dbReference type="InterPro" id="IPR030672">
    <property type="entry name" value="Adcy"/>
</dbReference>
<dbReference type="InterPro" id="IPR009398">
    <property type="entry name" value="Adcy_conserved_dom"/>
</dbReference>
<dbReference type="InterPro" id="IPR029787">
    <property type="entry name" value="Nucleotide_cyclase"/>
</dbReference>
<dbReference type="PANTHER" id="PTHR45627">
    <property type="entry name" value="ADENYLATE CYCLASE TYPE 1"/>
    <property type="match status" value="1"/>
</dbReference>
<dbReference type="PANTHER" id="PTHR45627:SF10">
    <property type="entry name" value="ADENYLATE CYCLASE TYPE 4"/>
    <property type="match status" value="1"/>
</dbReference>
<dbReference type="Pfam" id="PF16214">
    <property type="entry name" value="AC_N"/>
    <property type="match status" value="1"/>
</dbReference>
<dbReference type="Pfam" id="PF06327">
    <property type="entry name" value="Adcy_cons_dom"/>
    <property type="match status" value="1"/>
</dbReference>
<dbReference type="Pfam" id="PF00211">
    <property type="entry name" value="Guanylate_cyc"/>
    <property type="match status" value="2"/>
</dbReference>
<dbReference type="PIRSF" id="PIRSF039050">
    <property type="entry name" value="Ade_cyc"/>
    <property type="match status" value="1"/>
</dbReference>
<dbReference type="SMART" id="SM00044">
    <property type="entry name" value="CYCc"/>
    <property type="match status" value="2"/>
</dbReference>
<dbReference type="SUPFAM" id="SSF55073">
    <property type="entry name" value="Nucleotide cyclase"/>
    <property type="match status" value="2"/>
</dbReference>
<dbReference type="PROSITE" id="PS00452">
    <property type="entry name" value="GUANYLATE_CYCLASE_1"/>
    <property type="match status" value="2"/>
</dbReference>
<dbReference type="PROSITE" id="PS50125">
    <property type="entry name" value="GUANYLATE_CYCLASE_2"/>
    <property type="match status" value="2"/>
</dbReference>
<organism>
    <name type="scientific">Mus musculus</name>
    <name type="common">Mouse</name>
    <dbReference type="NCBI Taxonomy" id="10090"/>
    <lineage>
        <taxon>Eukaryota</taxon>
        <taxon>Metazoa</taxon>
        <taxon>Chordata</taxon>
        <taxon>Craniata</taxon>
        <taxon>Vertebrata</taxon>
        <taxon>Euteleostomi</taxon>
        <taxon>Mammalia</taxon>
        <taxon>Eutheria</taxon>
        <taxon>Euarchontoglires</taxon>
        <taxon>Glires</taxon>
        <taxon>Rodentia</taxon>
        <taxon>Myomorpha</taxon>
        <taxon>Muroidea</taxon>
        <taxon>Muridae</taxon>
        <taxon>Murinae</taxon>
        <taxon>Mus</taxon>
        <taxon>Mus</taxon>
    </lineage>
</organism>
<evidence type="ECO:0000250" key="1">
    <source>
        <dbReference type="UniProtKB" id="P26769"/>
    </source>
</evidence>
<evidence type="ECO:0000250" key="2">
    <source>
        <dbReference type="UniProtKB" id="P26770"/>
    </source>
</evidence>
<evidence type="ECO:0000250" key="3">
    <source>
        <dbReference type="UniProtKB" id="P30803"/>
    </source>
</evidence>
<evidence type="ECO:0000250" key="4">
    <source>
        <dbReference type="UniProtKB" id="Q8NFM4"/>
    </source>
</evidence>
<evidence type="ECO:0000255" key="5"/>
<evidence type="ECO:0000255" key="6">
    <source>
        <dbReference type="PROSITE-ProRule" id="PRU00099"/>
    </source>
</evidence>
<evidence type="ECO:0000256" key="7">
    <source>
        <dbReference type="SAM" id="MobiDB-lite"/>
    </source>
</evidence>
<proteinExistence type="evidence at protein level"/>
<sequence length="1077" mass="120380">MARLFSPRPPPSEDLFYETYYSLSQQYPLLILLLVIVLCALVALPAVAWASGRELTSDPSFLTTVLCALGGFSLLLGLASREQQLQRWTRPLSGLIWVALLALGYGFLFTGGVVSAWDQVSFFLFIIFTVYAMLPLGMRDAAAAGVISSLSHLLVLGLYLGWQPESQRALLPQLAANAVLFLCGNVVGAYHKALMERALRATFREALSSLHSRRRLDTEKKHQEHLLLSILPAYLAREMKAEIMARLQAGQRSRPENTNNFHSLYVKRHQGVSVLYADIVGFTRLASECSPKELVLMLNELFGKFDQIAKEHECMRIKILGDCYYCVSGLPLSLPDHAINCVRMGLDMCRAIRKLRVATGVDINMRVGVHSGSVLCGVIGLQKWQYDVWSHDVTLANHMEAGGVPGRVHITGATLALLAGAYAVERADTEHRDPYLRELGEPTYLVIDPRAEEEDEKGTAKGLLSSLEGHTMRPSLLMTRYLESWGAAKPFAHLSHLDSPVSTSTPLPEKAFSPQWSLDRSRTPRGLDDELDTGDAKFFQVIEQLNSQKQWKQSKDFNLLTLYFREKEMEKQYRLSALPAFKYYAACTFLVFLSNFTIQMLVTTRPPALIITYSITFLLFFLLLFVCFSEHLTKCVQKGPKMLHWLPALSVLVATRPGFRVALGTATILLVFTMAIASLLFLPVSSDCLFLASNVSSVTFNASWEMPGSLPLISIPLISIPYSMHCCVLGFLSCSLFLHMSFELKLLLLLLWLVASCSLFLHSHAWLSDCLIARLYQSPSDSRPGVLKEPKLMGAIYFFIFFFTLLVLARQNEYYCRLDFLWKKKLRQEREETETMENLTRLLLENVLPAHVAPQFIGQNRRNEDLYHQSYECVCVLFASVPDFKEFYSESNINHEGLECLRLLNEIIADFDELLSKPKFSGVEKIKTIGSTYMAATGLNATSGQDTQQDSERSCSHLGTMVEFAVALGSKLGVINKHSFNNFRLRVGLNHGPVVAGVIGAQKPQYDIWGNTVNVASRMESTGVLGKIQVTEETARALQSLGYTCYSRGSIKVKGKGELCTYFLNTDLTRTGSPSAS</sequence>
<keyword id="KW-0067">ATP-binding</keyword>
<keyword id="KW-0115">cAMP biosynthesis</keyword>
<keyword id="KW-1003">Cell membrane</keyword>
<keyword id="KW-0963">Cytoplasm</keyword>
<keyword id="KW-0903">Direct protein sequencing</keyword>
<keyword id="KW-0325">Glycoprotein</keyword>
<keyword id="KW-0456">Lyase</keyword>
<keyword id="KW-0460">Magnesium</keyword>
<keyword id="KW-0472">Membrane</keyword>
<keyword id="KW-0479">Metal-binding</keyword>
<keyword id="KW-0547">Nucleotide-binding</keyword>
<keyword id="KW-0597">Phosphoprotein</keyword>
<keyword id="KW-1185">Reference proteome</keyword>
<keyword id="KW-0677">Repeat</keyword>
<keyword id="KW-0812">Transmembrane</keyword>
<keyword id="KW-1133">Transmembrane helix</keyword>
<accession>Q91WF3</accession>
<protein>
    <recommendedName>
        <fullName>Adenylate cyclase type 4</fullName>
        <ecNumber evidence="2">4.6.1.1</ecNumber>
    </recommendedName>
    <alternativeName>
        <fullName>ATP pyrophosphate-lyase 4</fullName>
    </alternativeName>
    <alternativeName>
        <fullName>Adenylate cyclase type IV</fullName>
    </alternativeName>
    <alternativeName>
        <fullName>Adenylyl cyclase 4</fullName>
    </alternativeName>
</protein>
<reference key="1">
    <citation type="submission" date="2001-11" db="EMBL/GenBank/DDBJ databases">
        <title>Sequence of mouse adenylyl cyclase type IV.</title>
        <authorList>
            <person name="Rui X."/>
            <person name="Schimmer B.P."/>
        </authorList>
    </citation>
    <scope>NUCLEOTIDE SEQUENCE [MRNA]</scope>
    <source>
        <strain>FVB/N</strain>
        <tissue>Kidney</tissue>
    </source>
</reference>
<reference key="2">
    <citation type="journal article" date="2004" name="Genome Res.">
        <title>The status, quality, and expansion of the NIH full-length cDNA project: the Mammalian Gene Collection (MGC).</title>
        <authorList>
            <consortium name="The MGC Project Team"/>
        </authorList>
    </citation>
    <scope>NUCLEOTIDE SEQUENCE [LARGE SCALE MRNA]</scope>
    <source>
        <tissue>Kidney</tissue>
    </source>
</reference>
<reference key="3">
    <citation type="submission" date="2009-01" db="UniProtKB">
        <authorList>
            <person name="Lubec G."/>
            <person name="Sunyer B."/>
            <person name="Chen W.-Q."/>
        </authorList>
    </citation>
    <scope>PROTEIN SEQUENCE OF 355-366</scope>
    <scope>IDENTIFICATION BY MASS SPECTROMETRY</scope>
    <source>
        <strain>OF1</strain>
        <tissue>Hippocampus</tissue>
    </source>
</reference>
<feature type="chain" id="PRO_0000195691" description="Adenylate cyclase type 4">
    <location>
        <begin position="1"/>
        <end position="1077"/>
    </location>
</feature>
<feature type="topological domain" description="Cytoplasmic" evidence="5">
    <location>
        <begin position="1"/>
        <end position="28"/>
    </location>
</feature>
<feature type="transmembrane region" description="Helical" evidence="5">
    <location>
        <begin position="29"/>
        <end position="50"/>
    </location>
</feature>
<feature type="transmembrane region" description="Helical" evidence="5">
    <location>
        <begin position="61"/>
        <end position="80"/>
    </location>
</feature>
<feature type="transmembrane region" description="Helical" evidence="5">
    <location>
        <begin position="94"/>
        <end position="117"/>
    </location>
</feature>
<feature type="transmembrane region" description="Helical" evidence="5">
    <location>
        <begin position="120"/>
        <end position="138"/>
    </location>
</feature>
<feature type="transmembrane region" description="Helical" evidence="5">
    <location>
        <begin position="141"/>
        <end position="162"/>
    </location>
</feature>
<feature type="transmembrane region" description="Helical" evidence="5">
    <location>
        <begin position="170"/>
        <end position="190"/>
    </location>
</feature>
<feature type="topological domain" description="Cytoplasmic" evidence="5">
    <location>
        <begin position="191"/>
        <end position="582"/>
    </location>
</feature>
<feature type="transmembrane region" description="Helical" evidence="5">
    <location>
        <begin position="583"/>
        <end position="604"/>
    </location>
</feature>
<feature type="transmembrane region" description="Helical" evidence="5">
    <location>
        <begin position="608"/>
        <end position="630"/>
    </location>
</feature>
<feature type="transmembrane region" description="Helical" evidence="5">
    <location>
        <begin position="661"/>
        <end position="684"/>
    </location>
</feature>
<feature type="topological domain" description="Extracellular" evidence="5">
    <location>
        <begin position="685"/>
        <end position="717"/>
    </location>
</feature>
<feature type="transmembrane region" description="Helical" evidence="5">
    <location>
        <begin position="718"/>
        <end position="738"/>
    </location>
</feature>
<feature type="transmembrane region" description="Helical" evidence="5">
    <location>
        <begin position="746"/>
        <end position="766"/>
    </location>
</feature>
<feature type="transmembrane region" description="Helical" evidence="5">
    <location>
        <begin position="793"/>
        <end position="809"/>
    </location>
</feature>
<feature type="topological domain" description="Cytoplasmic" evidence="5">
    <location>
        <begin position="810"/>
        <end position="1077"/>
    </location>
</feature>
<feature type="region of interest" description="Disordered" evidence="7">
    <location>
        <begin position="503"/>
        <end position="524"/>
    </location>
</feature>
<feature type="binding site" evidence="3">
    <location>
        <begin position="278"/>
        <end position="283"/>
    </location>
    <ligand>
        <name>ATP</name>
        <dbReference type="ChEBI" id="CHEBI:30616"/>
    </ligand>
</feature>
<feature type="binding site" evidence="6">
    <location>
        <position position="278"/>
    </location>
    <ligand>
        <name>Mg(2+)</name>
        <dbReference type="ChEBI" id="CHEBI:18420"/>
        <label>1</label>
        <note>catalytic</note>
    </ligand>
</feature>
<feature type="binding site" evidence="6">
    <location>
        <position position="278"/>
    </location>
    <ligand>
        <name>Mg(2+)</name>
        <dbReference type="ChEBI" id="CHEBI:18420"/>
        <label>2</label>
        <note>catalytic</note>
    </ligand>
</feature>
<feature type="binding site" evidence="6">
    <location>
        <position position="279"/>
    </location>
    <ligand>
        <name>Mg(2+)</name>
        <dbReference type="ChEBI" id="CHEBI:18420"/>
        <label>2</label>
        <note>catalytic</note>
    </ligand>
</feature>
<feature type="binding site" evidence="3">
    <location>
        <begin position="320"/>
        <end position="322"/>
    </location>
    <ligand>
        <name>ATP</name>
        <dbReference type="ChEBI" id="CHEBI:30616"/>
    </ligand>
</feature>
<feature type="binding site" evidence="6">
    <location>
        <position position="322"/>
    </location>
    <ligand>
        <name>Mg(2+)</name>
        <dbReference type="ChEBI" id="CHEBI:18420"/>
        <label>1</label>
        <note>catalytic</note>
    </ligand>
</feature>
<feature type="binding site" evidence="6">
    <location>
        <position position="322"/>
    </location>
    <ligand>
        <name>Mg(2+)</name>
        <dbReference type="ChEBI" id="CHEBI:18420"/>
        <label>2</label>
        <note>catalytic</note>
    </ligand>
</feature>
<feature type="binding site" evidence="3">
    <location>
        <position position="366"/>
    </location>
    <ligand>
        <name>ATP</name>
        <dbReference type="ChEBI" id="CHEBI:30616"/>
    </ligand>
</feature>
<feature type="binding site" evidence="1">
    <location>
        <position position="927"/>
    </location>
    <ligand>
        <name>ATP</name>
        <dbReference type="ChEBI" id="CHEBI:30616"/>
    </ligand>
</feature>
<feature type="binding site" evidence="1">
    <location>
        <begin position="1007"/>
        <end position="1009"/>
    </location>
    <ligand>
        <name>ATP</name>
        <dbReference type="ChEBI" id="CHEBI:30616"/>
    </ligand>
</feature>
<feature type="binding site" evidence="1">
    <location>
        <begin position="1014"/>
        <end position="1018"/>
    </location>
    <ligand>
        <name>ATP</name>
        <dbReference type="ChEBI" id="CHEBI:30616"/>
    </ligand>
</feature>
<feature type="binding site" evidence="1">
    <location>
        <position position="1054"/>
    </location>
    <ligand>
        <name>ATP</name>
        <dbReference type="ChEBI" id="CHEBI:30616"/>
    </ligand>
</feature>
<feature type="modified residue" description="Phosphoserine" evidence="2">
    <location>
        <position position="517"/>
    </location>
</feature>
<feature type="modified residue" description="Phosphothreonine" evidence="2">
    <location>
        <position position="533"/>
    </location>
</feature>
<feature type="glycosylation site" description="N-linked (GlcNAc...) asparagine" evidence="5">
    <location>
        <position position="694"/>
    </location>
</feature>
<feature type="glycosylation site" description="N-linked (GlcNAc...) asparagine" evidence="5">
    <location>
        <position position="701"/>
    </location>
</feature>
<gene>
    <name type="primary">Adcy4</name>
</gene>